<sequence>MAVRLLRVASAALGDTAVRWQPLVGPRAGNRGPGGSIWLGLGGRAAAARTLSLSARAWSSSEDKITVHFINRDGKTLTTQGKVGDSLLDVVIENNLDIDGFGACEGTLACSTCHLIFEDHIFEKLEAITDEENDMLDLAYGLTDRSRLGCQICLTKAMDNMTVRVPEAVADARESIDLGKNSSKLE</sequence>
<evidence type="ECO:0000250" key="1">
    <source>
        <dbReference type="UniProtKB" id="P00257"/>
    </source>
</evidence>
<evidence type="ECO:0000250" key="2">
    <source>
        <dbReference type="UniProtKB" id="P10109"/>
    </source>
</evidence>
<evidence type="ECO:0000250" key="3">
    <source>
        <dbReference type="UniProtKB" id="P46656"/>
    </source>
</evidence>
<evidence type="ECO:0000255" key="4">
    <source>
        <dbReference type="PROSITE-ProRule" id="PRU00465"/>
    </source>
</evidence>
<evidence type="ECO:0000269" key="5">
    <source>
    </source>
</evidence>
<evidence type="ECO:0000269" key="6">
    <source ref="2"/>
</evidence>
<evidence type="ECO:0000305" key="7"/>
<name>ADX_PIG</name>
<comment type="function">
    <text evidence="1">Essential for the synthesis of various steroid hormones. Participates in the reduction of mitochondrial cytochrome P450 for steroidogenesis. Transfers electrons from adrenodoxin reductase to CYP11A1, a cytochrome P450 that catalyzes cholesterol side-chain cleavage. Does not form a ternary complex with adrenodoxin reductase and CYP11A1 but shuttles between the two enzymes to transfer electrons.</text>
</comment>
<comment type="cofactor">
    <cofactor>
        <name>[2Fe-2S] cluster</name>
        <dbReference type="ChEBI" id="CHEBI:190135"/>
    </cofactor>
    <text>Binds 1 [2Fe-2S] cluster.</text>
</comment>
<comment type="subunit">
    <text evidence="2">Interacts with CYP11A1.</text>
</comment>
<comment type="subcellular location">
    <subcellularLocation>
        <location evidence="2">Mitochondrion matrix</location>
    </subcellularLocation>
</comment>
<comment type="similarity">
    <text evidence="7">Belongs to the adrenodoxin/putidaredoxin family.</text>
</comment>
<proteinExistence type="evidence at protein level"/>
<protein>
    <recommendedName>
        <fullName>Adrenodoxin, mitochondrial</fullName>
    </recommendedName>
    <alternativeName>
        <fullName>Adrenal ferredoxin</fullName>
    </alternativeName>
    <alternativeName>
        <fullName>Ferredoxin-1</fullName>
    </alternativeName>
</protein>
<reference key="1">
    <citation type="journal article" date="1992" name="Arch. Biochem. Biophys.">
        <title>Molecular cloning and immunological characterization of porcine kidney ferredoxin.</title>
        <authorList>
            <person name="Omdahl J.L."/>
            <person name="Wilson K."/>
            <person name="Swerdlow H."/>
            <person name="Driscoll W.J."/>
        </authorList>
    </citation>
    <scope>NUCLEOTIDE SEQUENCE [MRNA]</scope>
    <source>
        <tissue>Kidney</tissue>
    </source>
</reference>
<reference key="2">
    <citation type="journal article" date="1978" name="Bioorg. Khim.">
        <title>Adrenodoxin.</title>
        <authorList>
            <person name="Akhrem A.A."/>
            <person name="Lapko A.G."/>
            <person name="Lapko V.N."/>
            <person name="Morozova L.A."/>
            <person name="Repin V.A."/>
            <person name="Tishchenko I.V."/>
            <person name="Chashchin V.L."/>
        </authorList>
    </citation>
    <scope>PROTEIN SEQUENCE OF 59-175</scope>
</reference>
<reference key="3">
    <citation type="journal article" date="1989" name="Eur. J. Biochem.">
        <title>Characterization and N-terminal amino acid sequence of multiple ferredoxins in kidney and adrenal mitochondria.</title>
        <authorList>
            <person name="Driscoll W.J."/>
            <person name="Omdahl J.L."/>
        </authorList>
    </citation>
    <scope>PROTEIN SEQUENCE OF 59-76</scope>
</reference>
<gene>
    <name type="primary">FDX1</name>
</gene>
<keyword id="KW-0001">2Fe-2S</keyword>
<keyword id="KW-0007">Acetylation</keyword>
<keyword id="KW-0153">Cholesterol metabolism</keyword>
<keyword id="KW-0903">Direct protein sequencing</keyword>
<keyword id="KW-0249">Electron transport</keyword>
<keyword id="KW-0408">Iron</keyword>
<keyword id="KW-0411">Iron-sulfur</keyword>
<keyword id="KW-0443">Lipid metabolism</keyword>
<keyword id="KW-0479">Metal-binding</keyword>
<keyword id="KW-0496">Mitochondrion</keyword>
<keyword id="KW-0597">Phosphoprotein</keyword>
<keyword id="KW-1185">Reference proteome</keyword>
<keyword id="KW-0753">Steroid metabolism</keyword>
<keyword id="KW-0755">Steroidogenesis</keyword>
<keyword id="KW-1207">Sterol metabolism</keyword>
<keyword id="KW-0809">Transit peptide</keyword>
<keyword id="KW-0813">Transport</keyword>
<dbReference type="EMBL" id="M57674">
    <property type="protein sequence ID" value="AAA31030.1"/>
    <property type="molecule type" value="mRNA"/>
</dbReference>
<dbReference type="PIR" id="S20332">
    <property type="entry name" value="AXPG"/>
</dbReference>
<dbReference type="RefSeq" id="NP_999230.1">
    <property type="nucleotide sequence ID" value="NM_214065.1"/>
</dbReference>
<dbReference type="RefSeq" id="XP_013844957.1">
    <property type="nucleotide sequence ID" value="XM_013989503.1"/>
</dbReference>
<dbReference type="SMR" id="P00258"/>
<dbReference type="FunCoup" id="P00258">
    <property type="interactions" value="542"/>
</dbReference>
<dbReference type="STRING" id="9823.ENSSSCP00000033794"/>
<dbReference type="PeptideAtlas" id="P00258"/>
<dbReference type="Ensembl" id="ENSSSCT00000065716.2">
    <property type="protein sequence ID" value="ENSSSCP00000033794.1"/>
    <property type="gene ID" value="ENSSSCG00000035945.2"/>
</dbReference>
<dbReference type="Ensembl" id="ENSSSCT00025065808.1">
    <property type="protein sequence ID" value="ENSSSCP00025028084.1"/>
    <property type="gene ID" value="ENSSSCG00025048372.1"/>
</dbReference>
<dbReference type="Ensembl" id="ENSSSCT00030088487.1">
    <property type="protein sequence ID" value="ENSSSCP00030040904.1"/>
    <property type="gene ID" value="ENSSSCG00030063230.1"/>
</dbReference>
<dbReference type="Ensembl" id="ENSSSCT00035040880.1">
    <property type="protein sequence ID" value="ENSSSCP00035016356.1"/>
    <property type="gene ID" value="ENSSSCG00035030873.1"/>
</dbReference>
<dbReference type="Ensembl" id="ENSSSCT00040052626.1">
    <property type="protein sequence ID" value="ENSSSCP00040021856.1"/>
    <property type="gene ID" value="ENSSSCG00040039367.1"/>
</dbReference>
<dbReference type="Ensembl" id="ENSSSCT00045008298.1">
    <property type="protein sequence ID" value="ENSSSCP00045005644.1"/>
    <property type="gene ID" value="ENSSSCG00045004989.1"/>
</dbReference>
<dbReference type="Ensembl" id="ENSSSCT00050024746.1">
    <property type="protein sequence ID" value="ENSSSCP00050010346.1"/>
    <property type="gene ID" value="ENSSSCG00050018243.1"/>
</dbReference>
<dbReference type="Ensembl" id="ENSSSCT00055032153.1">
    <property type="protein sequence ID" value="ENSSSCP00055025603.1"/>
    <property type="gene ID" value="ENSSSCG00055016302.1"/>
</dbReference>
<dbReference type="Ensembl" id="ENSSSCT00060081878.1">
    <property type="protein sequence ID" value="ENSSSCP00060035471.1"/>
    <property type="gene ID" value="ENSSSCG00060060010.1"/>
</dbReference>
<dbReference type="Ensembl" id="ENSSSCT00065058339.1">
    <property type="protein sequence ID" value="ENSSSCP00065025290.1"/>
    <property type="gene ID" value="ENSSSCG00065042670.1"/>
</dbReference>
<dbReference type="Ensembl" id="ENSSSCT00085032234">
    <property type="protein sequence ID" value="ENSSSCP00085022341"/>
    <property type="gene ID" value="ENSSSCG00085016934"/>
</dbReference>
<dbReference type="Ensembl" id="ENSSSCT00090025588">
    <property type="protein sequence ID" value="ENSSSCP00090015770"/>
    <property type="gene ID" value="ENSSSCG00090014595"/>
</dbReference>
<dbReference type="Ensembl" id="ENSSSCT00105010485">
    <property type="protein sequence ID" value="ENSSSCP00105007687"/>
    <property type="gene ID" value="ENSSSCG00105005221"/>
</dbReference>
<dbReference type="Ensembl" id="ENSSSCT00110025286">
    <property type="protein sequence ID" value="ENSSSCP00110016980"/>
    <property type="gene ID" value="ENSSSCG00110013243"/>
</dbReference>
<dbReference type="Ensembl" id="ENSSSCT00115011490">
    <property type="protein sequence ID" value="ENSSSCP00115010844"/>
    <property type="gene ID" value="ENSSSCG00115006631"/>
</dbReference>
<dbReference type="Ensembl" id="ENSSSCT00130016318">
    <property type="protein sequence ID" value="ENSSSCP00130011005"/>
    <property type="gene ID" value="ENSSSCG00130008847"/>
</dbReference>
<dbReference type="GeneID" id="397133"/>
<dbReference type="KEGG" id="ssc:397133"/>
<dbReference type="CTD" id="2230"/>
<dbReference type="VGNC" id="VGNC:88078">
    <property type="gene designation" value="FDX1"/>
</dbReference>
<dbReference type="GeneTree" id="ENSGT00940000156916"/>
<dbReference type="InParanoid" id="P00258"/>
<dbReference type="OMA" id="TPMEEDM"/>
<dbReference type="OrthoDB" id="268593at2759"/>
<dbReference type="Reactome" id="R-SSC-1362409">
    <property type="pathway name" value="Mitochondrial iron-sulfur cluster biogenesis"/>
</dbReference>
<dbReference type="Reactome" id="R-SSC-196108">
    <property type="pathway name" value="Pregnenolone biosynthesis"/>
</dbReference>
<dbReference type="Reactome" id="R-SSC-211976">
    <property type="pathway name" value="Endogenous sterols"/>
</dbReference>
<dbReference type="Reactome" id="R-SSC-2395516">
    <property type="pathway name" value="Electron transport from NADPH to Ferredoxin"/>
</dbReference>
<dbReference type="Reactome" id="R-SSC-9857492">
    <property type="pathway name" value="Protein lipoylation"/>
</dbReference>
<dbReference type="Proteomes" id="UP000008227">
    <property type="component" value="Chromosome 9"/>
</dbReference>
<dbReference type="Proteomes" id="UP000314985">
    <property type="component" value="Unplaced"/>
</dbReference>
<dbReference type="Proteomes" id="UP000694570">
    <property type="component" value="Unplaced"/>
</dbReference>
<dbReference type="Proteomes" id="UP000694571">
    <property type="component" value="Unplaced"/>
</dbReference>
<dbReference type="Proteomes" id="UP000694720">
    <property type="component" value="Unplaced"/>
</dbReference>
<dbReference type="Proteomes" id="UP000694722">
    <property type="component" value="Unplaced"/>
</dbReference>
<dbReference type="Proteomes" id="UP000694723">
    <property type="component" value="Unplaced"/>
</dbReference>
<dbReference type="Proteomes" id="UP000694724">
    <property type="component" value="Unplaced"/>
</dbReference>
<dbReference type="Proteomes" id="UP000694725">
    <property type="component" value="Unplaced"/>
</dbReference>
<dbReference type="Proteomes" id="UP000694726">
    <property type="component" value="Unplaced"/>
</dbReference>
<dbReference type="Proteomes" id="UP000694727">
    <property type="component" value="Unplaced"/>
</dbReference>
<dbReference type="Proteomes" id="UP000694728">
    <property type="component" value="Unplaced"/>
</dbReference>
<dbReference type="Bgee" id="ENSSSCG00000035945">
    <property type="expression patterns" value="Expressed in ovary and 47 other cell types or tissues"/>
</dbReference>
<dbReference type="GO" id="GO:0005759">
    <property type="term" value="C:mitochondrial matrix"/>
    <property type="evidence" value="ECO:0000250"/>
    <property type="project" value="UniProtKB"/>
</dbReference>
<dbReference type="GO" id="GO:0005739">
    <property type="term" value="C:mitochondrion"/>
    <property type="evidence" value="ECO:0000318"/>
    <property type="project" value="GO_Central"/>
</dbReference>
<dbReference type="GO" id="GO:0051537">
    <property type="term" value="F:2 iron, 2 sulfur cluster binding"/>
    <property type="evidence" value="ECO:0000250"/>
    <property type="project" value="UniProtKB"/>
</dbReference>
<dbReference type="GO" id="GO:0009055">
    <property type="term" value="F:electron transfer activity"/>
    <property type="evidence" value="ECO:0000250"/>
    <property type="project" value="UniProtKB"/>
</dbReference>
<dbReference type="GO" id="GO:0046872">
    <property type="term" value="F:metal ion binding"/>
    <property type="evidence" value="ECO:0007669"/>
    <property type="project" value="UniProtKB-KW"/>
</dbReference>
<dbReference type="GO" id="GO:0071320">
    <property type="term" value="P:cellular response to cAMP"/>
    <property type="evidence" value="ECO:0007669"/>
    <property type="project" value="Ensembl"/>
</dbReference>
<dbReference type="GO" id="GO:1904322">
    <property type="term" value="P:cellular response to forskolin"/>
    <property type="evidence" value="ECO:0007669"/>
    <property type="project" value="Ensembl"/>
</dbReference>
<dbReference type="GO" id="GO:0008203">
    <property type="term" value="P:cholesterol metabolic process"/>
    <property type="evidence" value="ECO:0000250"/>
    <property type="project" value="UniProtKB"/>
</dbReference>
<dbReference type="GO" id="GO:0022900">
    <property type="term" value="P:electron transport chain"/>
    <property type="evidence" value="ECO:0000318"/>
    <property type="project" value="GO_Central"/>
</dbReference>
<dbReference type="GO" id="GO:0042446">
    <property type="term" value="P:hormone biosynthetic process"/>
    <property type="evidence" value="ECO:0000250"/>
    <property type="project" value="UniProtKB"/>
</dbReference>
<dbReference type="GO" id="GO:0140647">
    <property type="term" value="P:P450-containing electron transport chain"/>
    <property type="evidence" value="ECO:0007669"/>
    <property type="project" value="InterPro"/>
</dbReference>
<dbReference type="GO" id="GO:0006694">
    <property type="term" value="P:steroid biosynthetic process"/>
    <property type="evidence" value="ECO:0007669"/>
    <property type="project" value="UniProtKB-KW"/>
</dbReference>
<dbReference type="CDD" id="cd00207">
    <property type="entry name" value="fer2"/>
    <property type="match status" value="1"/>
</dbReference>
<dbReference type="FunFam" id="3.10.20.30:FF:000013">
    <property type="entry name" value="Adrenodoxin, mitochondrial"/>
    <property type="match status" value="1"/>
</dbReference>
<dbReference type="Gene3D" id="3.10.20.30">
    <property type="match status" value="1"/>
</dbReference>
<dbReference type="InterPro" id="IPR036010">
    <property type="entry name" value="2Fe-2S_ferredoxin-like_sf"/>
</dbReference>
<dbReference type="InterPro" id="IPR001041">
    <property type="entry name" value="2Fe-2S_ferredoxin-type"/>
</dbReference>
<dbReference type="InterPro" id="IPR001055">
    <property type="entry name" value="Adrenodoxin-like"/>
</dbReference>
<dbReference type="InterPro" id="IPR018298">
    <property type="entry name" value="Adrenodoxin_Fe-S_BS"/>
</dbReference>
<dbReference type="InterPro" id="IPR012675">
    <property type="entry name" value="Beta-grasp_dom_sf"/>
</dbReference>
<dbReference type="PANTHER" id="PTHR23426:SF26">
    <property type="entry name" value="ADRENODOXIN, MITOCHONDRIAL"/>
    <property type="match status" value="1"/>
</dbReference>
<dbReference type="PANTHER" id="PTHR23426">
    <property type="entry name" value="FERREDOXIN/ADRENODOXIN"/>
    <property type="match status" value="1"/>
</dbReference>
<dbReference type="Pfam" id="PF00111">
    <property type="entry name" value="Fer2"/>
    <property type="match status" value="1"/>
</dbReference>
<dbReference type="PRINTS" id="PR00355">
    <property type="entry name" value="ADRENODOXIN"/>
</dbReference>
<dbReference type="SUPFAM" id="SSF54292">
    <property type="entry name" value="2Fe-2S ferredoxin-like"/>
    <property type="match status" value="1"/>
</dbReference>
<dbReference type="PROSITE" id="PS51085">
    <property type="entry name" value="2FE2S_FER_2"/>
    <property type="match status" value="1"/>
</dbReference>
<dbReference type="PROSITE" id="PS00814">
    <property type="entry name" value="ADX"/>
    <property type="match status" value="1"/>
</dbReference>
<organism>
    <name type="scientific">Sus scrofa</name>
    <name type="common">Pig</name>
    <dbReference type="NCBI Taxonomy" id="9823"/>
    <lineage>
        <taxon>Eukaryota</taxon>
        <taxon>Metazoa</taxon>
        <taxon>Chordata</taxon>
        <taxon>Craniata</taxon>
        <taxon>Vertebrata</taxon>
        <taxon>Euteleostomi</taxon>
        <taxon>Mammalia</taxon>
        <taxon>Eutheria</taxon>
        <taxon>Laurasiatheria</taxon>
        <taxon>Artiodactyla</taxon>
        <taxon>Suina</taxon>
        <taxon>Suidae</taxon>
        <taxon>Sus</taxon>
    </lineage>
</organism>
<feature type="transit peptide" description="Mitochondrion" evidence="5 6">
    <location>
        <begin position="1"/>
        <end position="58"/>
    </location>
</feature>
<feature type="chain" id="PRO_0000000990" description="Adrenodoxin, mitochondrial">
    <location>
        <begin position="59"/>
        <end position="186"/>
    </location>
</feature>
<feature type="domain" description="2Fe-2S ferredoxin-type" evidence="4">
    <location>
        <begin position="65"/>
        <end position="169"/>
    </location>
</feature>
<feature type="binding site" evidence="4">
    <location>
        <position position="104"/>
    </location>
    <ligand>
        <name>[2Fe-2S] cluster</name>
        <dbReference type="ChEBI" id="CHEBI:190135"/>
    </ligand>
</feature>
<feature type="binding site" evidence="4">
    <location>
        <position position="110"/>
    </location>
    <ligand>
        <name>[2Fe-2S] cluster</name>
        <dbReference type="ChEBI" id="CHEBI:190135"/>
    </ligand>
</feature>
<feature type="binding site" evidence="4">
    <location>
        <position position="113"/>
    </location>
    <ligand>
        <name>[2Fe-2S] cluster</name>
        <dbReference type="ChEBI" id="CHEBI:190135"/>
    </ligand>
</feature>
<feature type="binding site" evidence="4">
    <location>
        <position position="150"/>
    </location>
    <ligand>
        <name>[2Fe-2S] cluster</name>
        <dbReference type="ChEBI" id="CHEBI:190135"/>
    </ligand>
</feature>
<feature type="modified residue" description="Phosphoserine" evidence="3">
    <location>
        <position position="61"/>
    </location>
</feature>
<feature type="modified residue" description="N6-acetyllysine; alternate" evidence="3">
    <location>
        <position position="64"/>
    </location>
</feature>
<feature type="modified residue" description="N6-succinyllysine; alternate" evidence="3">
    <location>
        <position position="64"/>
    </location>
</feature>
<feature type="modified residue" description="N6-succinyllysine" evidence="3">
    <location>
        <position position="156"/>
    </location>
</feature>
<feature type="modified residue" description="Phosphoserine" evidence="2">
    <location>
        <position position="175"/>
    </location>
</feature>
<accession>P00258</accession>